<proteinExistence type="inferred from homology"/>
<accession>P56978</accession>
<gene>
    <name evidence="1" type="primary">cyaY</name>
    <name type="ordered locus">STM3943</name>
    <name type="ORF">STMD1.45</name>
</gene>
<protein>
    <recommendedName>
        <fullName evidence="1">Iron-sulfur cluster assembly protein CyaY</fullName>
    </recommendedName>
</protein>
<dbReference type="EMBL" id="AF233324">
    <property type="protein sequence ID" value="AAF33448.1"/>
    <property type="molecule type" value="Genomic_DNA"/>
</dbReference>
<dbReference type="EMBL" id="AE006468">
    <property type="protein sequence ID" value="AAL22788.1"/>
    <property type="molecule type" value="Genomic_DNA"/>
</dbReference>
<dbReference type="RefSeq" id="NP_462829.1">
    <property type="nucleotide sequence ID" value="NC_003197.2"/>
</dbReference>
<dbReference type="RefSeq" id="WP_000999930.1">
    <property type="nucleotide sequence ID" value="NC_003197.2"/>
</dbReference>
<dbReference type="SMR" id="P56978"/>
<dbReference type="STRING" id="99287.STM3943"/>
<dbReference type="PaxDb" id="99287-STM3943"/>
<dbReference type="GeneID" id="1255469"/>
<dbReference type="KEGG" id="stm:STM3943"/>
<dbReference type="PATRIC" id="fig|99287.12.peg.4160"/>
<dbReference type="HOGENOM" id="CLU_080880_3_0_6"/>
<dbReference type="PhylomeDB" id="P56978"/>
<dbReference type="BioCyc" id="SENT99287:STM3943-MONOMER"/>
<dbReference type="Proteomes" id="UP000001014">
    <property type="component" value="Chromosome"/>
</dbReference>
<dbReference type="GO" id="GO:0005829">
    <property type="term" value="C:cytosol"/>
    <property type="evidence" value="ECO:0000318"/>
    <property type="project" value="GO_Central"/>
</dbReference>
<dbReference type="GO" id="GO:0008199">
    <property type="term" value="F:ferric iron binding"/>
    <property type="evidence" value="ECO:0000318"/>
    <property type="project" value="GO_Central"/>
</dbReference>
<dbReference type="GO" id="GO:0008198">
    <property type="term" value="F:ferrous iron binding"/>
    <property type="evidence" value="ECO:0000318"/>
    <property type="project" value="GO_Central"/>
</dbReference>
<dbReference type="GO" id="GO:0016226">
    <property type="term" value="P:iron-sulfur cluster assembly"/>
    <property type="evidence" value="ECO:0000318"/>
    <property type="project" value="GO_Central"/>
</dbReference>
<dbReference type="CDD" id="cd00503">
    <property type="entry name" value="Frataxin"/>
    <property type="match status" value="1"/>
</dbReference>
<dbReference type="FunFam" id="3.30.920.10:FF:000001">
    <property type="entry name" value="Iron-sulfur cluster assembly protein CyaY"/>
    <property type="match status" value="1"/>
</dbReference>
<dbReference type="Gene3D" id="3.30.920.10">
    <property type="entry name" value="Frataxin/CyaY"/>
    <property type="match status" value="1"/>
</dbReference>
<dbReference type="HAMAP" id="MF_00142">
    <property type="entry name" value="CyaY"/>
    <property type="match status" value="1"/>
</dbReference>
<dbReference type="InterPro" id="IPR047584">
    <property type="entry name" value="CyaY"/>
</dbReference>
<dbReference type="InterPro" id="IPR002908">
    <property type="entry name" value="Frataxin/CyaY"/>
</dbReference>
<dbReference type="InterPro" id="IPR036524">
    <property type="entry name" value="Frataxin/CyaY_sf"/>
</dbReference>
<dbReference type="InterPro" id="IPR020895">
    <property type="entry name" value="Frataxin_CS"/>
</dbReference>
<dbReference type="NCBIfam" id="TIGR03421">
    <property type="entry name" value="FeS_CyaY"/>
    <property type="match status" value="1"/>
</dbReference>
<dbReference type="PANTHER" id="PTHR16821">
    <property type="entry name" value="FRATAXIN"/>
    <property type="match status" value="1"/>
</dbReference>
<dbReference type="PANTHER" id="PTHR16821:SF2">
    <property type="entry name" value="FRATAXIN, MITOCHONDRIAL"/>
    <property type="match status" value="1"/>
</dbReference>
<dbReference type="Pfam" id="PF01491">
    <property type="entry name" value="Frataxin_Cyay"/>
    <property type="match status" value="1"/>
</dbReference>
<dbReference type="SMART" id="SM01219">
    <property type="entry name" value="Frataxin_Cyay"/>
    <property type="match status" value="1"/>
</dbReference>
<dbReference type="SUPFAM" id="SSF55387">
    <property type="entry name" value="Frataxin/Nqo15-like"/>
    <property type="match status" value="1"/>
</dbReference>
<dbReference type="PROSITE" id="PS01344">
    <property type="entry name" value="FRATAXIN_1"/>
    <property type="match status" value="1"/>
</dbReference>
<dbReference type="PROSITE" id="PS50810">
    <property type="entry name" value="FRATAXIN_2"/>
    <property type="match status" value="1"/>
</dbReference>
<keyword id="KW-0408">Iron</keyword>
<keyword id="KW-0479">Metal-binding</keyword>
<keyword id="KW-1185">Reference proteome</keyword>
<feature type="chain" id="PRO_0000193961" description="Iron-sulfur cluster assembly protein CyaY">
    <location>
        <begin position="1"/>
        <end position="106"/>
    </location>
</feature>
<organism>
    <name type="scientific">Salmonella typhimurium (strain LT2 / SGSC1412 / ATCC 700720)</name>
    <dbReference type="NCBI Taxonomy" id="99287"/>
    <lineage>
        <taxon>Bacteria</taxon>
        <taxon>Pseudomonadati</taxon>
        <taxon>Pseudomonadota</taxon>
        <taxon>Gammaproteobacteria</taxon>
        <taxon>Enterobacterales</taxon>
        <taxon>Enterobacteriaceae</taxon>
        <taxon>Salmonella</taxon>
    </lineage>
</organism>
<comment type="function">
    <text evidence="1">Involved in iron-sulfur (Fe-S) cluster assembly. May act as a regulator of Fe-S biogenesis.</text>
</comment>
<comment type="similarity">
    <text evidence="1 2">Belongs to the frataxin family.</text>
</comment>
<name>CYAY_SALTY</name>
<sequence>MNDSEFHRLADALWLTIEERLDSWDGDSDIDCEINGGVLTLSFENGSKIIINRQEPLHQVWLATKQGGYHFDLKGDEWVCDRSGETFWDLLEQAATQQAGEKVSFR</sequence>
<evidence type="ECO:0000255" key="1">
    <source>
        <dbReference type="HAMAP-Rule" id="MF_00142"/>
    </source>
</evidence>
<evidence type="ECO:0000305" key="2"/>
<reference key="1">
    <citation type="journal article" date="2001" name="Nature">
        <title>Complete genome sequence of Salmonella enterica serovar Typhimurium LT2.</title>
        <authorList>
            <person name="McClelland M."/>
            <person name="Sanderson K.E."/>
            <person name="Spieth J."/>
            <person name="Clifton S.W."/>
            <person name="Latreille P."/>
            <person name="Courtney L."/>
            <person name="Porwollik S."/>
            <person name="Ali J."/>
            <person name="Dante M."/>
            <person name="Du F."/>
            <person name="Hou S."/>
            <person name="Layman D."/>
            <person name="Leonard S."/>
            <person name="Nguyen C."/>
            <person name="Scott K."/>
            <person name="Holmes A."/>
            <person name="Grewal N."/>
            <person name="Mulvaney E."/>
            <person name="Ryan E."/>
            <person name="Sun H."/>
            <person name="Florea L."/>
            <person name="Miller W."/>
            <person name="Stoneking T."/>
            <person name="Nhan M."/>
            <person name="Waterston R."/>
            <person name="Wilson R.K."/>
        </authorList>
    </citation>
    <scope>NUCLEOTIDE SEQUENCE [LARGE SCALE GENOMIC DNA]</scope>
    <source>
        <strain>LT2 / SGSC1412 / ATCC 700720</strain>
    </source>
</reference>